<protein>
    <recommendedName>
        <fullName evidence="1">Peptidyl-tRNA hydrolase</fullName>
        <shortName evidence="1">Pth</shortName>
        <ecNumber evidence="1">3.1.1.29</ecNumber>
    </recommendedName>
</protein>
<name>PTH_LISMH</name>
<evidence type="ECO:0000255" key="1">
    <source>
        <dbReference type="HAMAP-Rule" id="MF_00083"/>
    </source>
</evidence>
<reference key="1">
    <citation type="journal article" date="2011" name="J. Bacteriol.">
        <title>Genome sequence of lineage III Listeria monocytogenes strain HCC23.</title>
        <authorList>
            <person name="Steele C.L."/>
            <person name="Donaldson J.R."/>
            <person name="Paul D."/>
            <person name="Banes M.M."/>
            <person name="Arick T."/>
            <person name="Bridges S.M."/>
            <person name="Lawrence M.L."/>
        </authorList>
    </citation>
    <scope>NUCLEOTIDE SEQUENCE [LARGE SCALE GENOMIC DNA]</scope>
    <source>
        <strain>HCC23</strain>
    </source>
</reference>
<gene>
    <name evidence="1" type="primary">pth</name>
    <name type="ordered locus">LMHCC_2430</name>
</gene>
<proteinExistence type="inferred from homology"/>
<feature type="chain" id="PRO_1000118395" description="Peptidyl-tRNA hydrolase">
    <location>
        <begin position="1"/>
        <end position="186"/>
    </location>
</feature>
<feature type="active site" description="Proton acceptor" evidence="1">
    <location>
        <position position="19"/>
    </location>
</feature>
<feature type="binding site" evidence="1">
    <location>
        <position position="14"/>
    </location>
    <ligand>
        <name>tRNA</name>
        <dbReference type="ChEBI" id="CHEBI:17843"/>
    </ligand>
</feature>
<feature type="binding site" evidence="1">
    <location>
        <position position="64"/>
    </location>
    <ligand>
        <name>tRNA</name>
        <dbReference type="ChEBI" id="CHEBI:17843"/>
    </ligand>
</feature>
<feature type="binding site" evidence="1">
    <location>
        <position position="66"/>
    </location>
    <ligand>
        <name>tRNA</name>
        <dbReference type="ChEBI" id="CHEBI:17843"/>
    </ligand>
</feature>
<feature type="binding site" evidence="1">
    <location>
        <position position="112"/>
    </location>
    <ligand>
        <name>tRNA</name>
        <dbReference type="ChEBI" id="CHEBI:17843"/>
    </ligand>
</feature>
<feature type="site" description="Discriminates between blocked and unblocked aminoacyl-tRNA" evidence="1">
    <location>
        <position position="9"/>
    </location>
</feature>
<feature type="site" description="Stabilizes the basic form of H active site to accept a proton" evidence="1">
    <location>
        <position position="91"/>
    </location>
</feature>
<organism>
    <name type="scientific">Listeria monocytogenes serotype 4a (strain HCC23)</name>
    <dbReference type="NCBI Taxonomy" id="552536"/>
    <lineage>
        <taxon>Bacteria</taxon>
        <taxon>Bacillati</taxon>
        <taxon>Bacillota</taxon>
        <taxon>Bacilli</taxon>
        <taxon>Bacillales</taxon>
        <taxon>Listeriaceae</taxon>
        <taxon>Listeria</taxon>
    </lineage>
</organism>
<accession>B8DGL2</accession>
<comment type="function">
    <text evidence="1">Hydrolyzes ribosome-free peptidyl-tRNAs (with 1 or more amino acids incorporated), which drop off the ribosome during protein synthesis, or as a result of ribosome stalling.</text>
</comment>
<comment type="function">
    <text evidence="1">Catalyzes the release of premature peptidyl moieties from peptidyl-tRNA molecules trapped in stalled 50S ribosomal subunits, and thus maintains levels of free tRNAs and 50S ribosomes.</text>
</comment>
<comment type="catalytic activity">
    <reaction evidence="1">
        <text>an N-acyl-L-alpha-aminoacyl-tRNA + H2O = an N-acyl-L-amino acid + a tRNA + H(+)</text>
        <dbReference type="Rhea" id="RHEA:54448"/>
        <dbReference type="Rhea" id="RHEA-COMP:10123"/>
        <dbReference type="Rhea" id="RHEA-COMP:13883"/>
        <dbReference type="ChEBI" id="CHEBI:15377"/>
        <dbReference type="ChEBI" id="CHEBI:15378"/>
        <dbReference type="ChEBI" id="CHEBI:59874"/>
        <dbReference type="ChEBI" id="CHEBI:78442"/>
        <dbReference type="ChEBI" id="CHEBI:138191"/>
        <dbReference type="EC" id="3.1.1.29"/>
    </reaction>
</comment>
<comment type="subunit">
    <text evidence="1">Monomer.</text>
</comment>
<comment type="subcellular location">
    <subcellularLocation>
        <location evidence="1">Cytoplasm</location>
    </subcellularLocation>
</comment>
<comment type="similarity">
    <text evidence="1">Belongs to the PTH family.</text>
</comment>
<keyword id="KW-0963">Cytoplasm</keyword>
<keyword id="KW-0378">Hydrolase</keyword>
<keyword id="KW-0694">RNA-binding</keyword>
<keyword id="KW-0820">tRNA-binding</keyword>
<sequence length="186" mass="21018">MKLIAGLGNPGKKYERTRHNVGFMVVDELSFRHQTPWKKSKFNGMTSEIIVGGEKMILVKPLTFMNASGECIRPLMDYYNIPIEDVVIVYDDLDLPVGKIRLRQKGSAGGHNGMKSIIQHVKTQEFNRIRVGVSRPLKGEVIHYVLGDFPKAEQPDIIAAIQKSADAIEDYAQTPFIEVMNKYNQK</sequence>
<dbReference type="EC" id="3.1.1.29" evidence="1"/>
<dbReference type="EMBL" id="CP001175">
    <property type="protein sequence ID" value="ACK40765.1"/>
    <property type="molecule type" value="Genomic_DNA"/>
</dbReference>
<dbReference type="RefSeq" id="WP_012582087.1">
    <property type="nucleotide sequence ID" value="NC_011660.1"/>
</dbReference>
<dbReference type="SMR" id="B8DGL2"/>
<dbReference type="KEGG" id="lmh:LMHCC_2430"/>
<dbReference type="HOGENOM" id="CLU_062456_4_1_9"/>
<dbReference type="GO" id="GO:0005737">
    <property type="term" value="C:cytoplasm"/>
    <property type="evidence" value="ECO:0007669"/>
    <property type="project" value="UniProtKB-SubCell"/>
</dbReference>
<dbReference type="GO" id="GO:0004045">
    <property type="term" value="F:peptidyl-tRNA hydrolase activity"/>
    <property type="evidence" value="ECO:0007669"/>
    <property type="project" value="UniProtKB-UniRule"/>
</dbReference>
<dbReference type="GO" id="GO:0000049">
    <property type="term" value="F:tRNA binding"/>
    <property type="evidence" value="ECO:0007669"/>
    <property type="project" value="UniProtKB-UniRule"/>
</dbReference>
<dbReference type="GO" id="GO:0006515">
    <property type="term" value="P:protein quality control for misfolded or incompletely synthesized proteins"/>
    <property type="evidence" value="ECO:0007669"/>
    <property type="project" value="UniProtKB-UniRule"/>
</dbReference>
<dbReference type="GO" id="GO:0072344">
    <property type="term" value="P:rescue of stalled ribosome"/>
    <property type="evidence" value="ECO:0007669"/>
    <property type="project" value="UniProtKB-UniRule"/>
</dbReference>
<dbReference type="CDD" id="cd00462">
    <property type="entry name" value="PTH"/>
    <property type="match status" value="1"/>
</dbReference>
<dbReference type="FunFam" id="3.40.50.1470:FF:000001">
    <property type="entry name" value="Peptidyl-tRNA hydrolase"/>
    <property type="match status" value="1"/>
</dbReference>
<dbReference type="Gene3D" id="3.40.50.1470">
    <property type="entry name" value="Peptidyl-tRNA hydrolase"/>
    <property type="match status" value="1"/>
</dbReference>
<dbReference type="HAMAP" id="MF_00083">
    <property type="entry name" value="Pept_tRNA_hydro_bact"/>
    <property type="match status" value="1"/>
</dbReference>
<dbReference type="InterPro" id="IPR001328">
    <property type="entry name" value="Pept_tRNA_hydro"/>
</dbReference>
<dbReference type="InterPro" id="IPR018171">
    <property type="entry name" value="Pept_tRNA_hydro_CS"/>
</dbReference>
<dbReference type="InterPro" id="IPR036416">
    <property type="entry name" value="Pept_tRNA_hydro_sf"/>
</dbReference>
<dbReference type="NCBIfam" id="TIGR00447">
    <property type="entry name" value="pth"/>
    <property type="match status" value="1"/>
</dbReference>
<dbReference type="PANTHER" id="PTHR17224">
    <property type="entry name" value="PEPTIDYL-TRNA HYDROLASE"/>
    <property type="match status" value="1"/>
</dbReference>
<dbReference type="PANTHER" id="PTHR17224:SF1">
    <property type="entry name" value="PEPTIDYL-TRNA HYDROLASE"/>
    <property type="match status" value="1"/>
</dbReference>
<dbReference type="Pfam" id="PF01195">
    <property type="entry name" value="Pept_tRNA_hydro"/>
    <property type="match status" value="1"/>
</dbReference>
<dbReference type="SUPFAM" id="SSF53178">
    <property type="entry name" value="Peptidyl-tRNA hydrolase-like"/>
    <property type="match status" value="1"/>
</dbReference>
<dbReference type="PROSITE" id="PS01195">
    <property type="entry name" value="PEPT_TRNA_HYDROL_1"/>
    <property type="match status" value="1"/>
</dbReference>
<dbReference type="PROSITE" id="PS01196">
    <property type="entry name" value="PEPT_TRNA_HYDROL_2"/>
    <property type="match status" value="1"/>
</dbReference>